<evidence type="ECO:0000250" key="1"/>
<evidence type="ECO:0000255" key="2">
    <source>
        <dbReference type="PROSITE-ProRule" id="PRU00176"/>
    </source>
</evidence>
<evidence type="ECO:0000256" key="3">
    <source>
        <dbReference type="SAM" id="MobiDB-lite"/>
    </source>
</evidence>
<evidence type="ECO:0000305" key="4"/>
<protein>
    <recommendedName>
        <fullName>Splicing factor 3B subunit 4</fullName>
    </recommendedName>
    <alternativeName>
        <fullName>Spliceosome-associated protein 49</fullName>
    </alternativeName>
</protein>
<accession>Q09442</accession>
<accession>Q8T8N6</accession>
<keyword id="KW-0507">mRNA processing</keyword>
<keyword id="KW-0508">mRNA splicing</keyword>
<keyword id="KW-0539">Nucleus</keyword>
<keyword id="KW-1185">Reference proteome</keyword>
<keyword id="KW-0677">Repeat</keyword>
<keyword id="KW-0694">RNA-binding</keyword>
<keyword id="KW-0747">Spliceosome</keyword>
<proteinExistence type="evidence at protein level"/>
<comment type="function">
    <text evidence="1">Subunit of the splicing factor SF3B required for 'A' complex assembly formed by the stable binding of U2 snRNP to the branchpoint sequence (BPS) in pre-mRNA. Sequence independent binding of SF3A/SF3B complex upstream of the branch site is essential, it may anchor U2 snRNP to the pre-mRNA. May also be involved in the assembly of the 'E' complex. SF3B4 has been found in complex 'B' and 'C' as well. Belongs also to the minor U12-dependent spliceosome, which is involved in the splicing of rare class of nuclear pre-mRNA intron (By similarity).</text>
</comment>
<comment type="interaction">
    <interactant intactId="EBI-2316106">
        <id>Q09442</id>
    </interactant>
    <interactant intactId="EBI-325337">
        <id>G5EC32</id>
        <label>sorb-1</label>
    </interactant>
    <organismsDiffer>false</organismsDiffer>
    <experiments>16</experiments>
</comment>
<comment type="interaction">
    <interactant intactId="EBI-2316106">
        <id>Q09442</id>
    </interactant>
    <interactant intactId="EBI-6538807">
        <id>G5EE56</id>
        <label>src-1</label>
    </interactant>
    <organismsDiffer>false</organismsDiffer>
    <experiments>3</experiments>
</comment>
<comment type="subcellular location">
    <subcellularLocation>
        <location evidence="1">Nucleus</location>
    </subcellularLocation>
</comment>
<comment type="similarity">
    <text evidence="4">Belongs to the SF3B4 family.</text>
</comment>
<sequence>MSAGPIVERNQDATIYVGGLDEKVSESILWELMVQAGPVVSVNMPKDRVTANHQGFGFVEFMGEEDADYAIKILNMIKLYGKPIKVNKASAHEKNMDVGANIFVGNLDPEVDEKLLYDTFSAFGVILQVPKIMRDVDSGTSKGFAFINFASFEASDTALEAMNGQFLCNRAITVSYAFKRDSKGERHGTAAERMLAAQNPLFPKDRPHQVFSDVPLGVPANTPLAMPGVHAAIAAHATGRPGYQPPPLMGMAQSGYQGQYPPVPPPPPSVTPMPPPMPPTPGMTPRPPPPPSSGMWPPPPPPPPGRTPGPPGMPGMPPPPPPSRFGPPGMGGMPPPPPPGMRYPGGMPPPPPPRYPSAGPGMYPPPPPSRPPAPPSGHGMIPPPPPPS</sequence>
<dbReference type="EMBL" id="Z46676">
    <property type="protein sequence ID" value="CAB60993.2"/>
    <property type="molecule type" value="Genomic_DNA"/>
</dbReference>
<dbReference type="PIR" id="T19069">
    <property type="entry name" value="T19069"/>
</dbReference>
<dbReference type="RefSeq" id="NP_001021932.1">
    <property type="nucleotide sequence ID" value="NM_001026761.2"/>
</dbReference>
<dbReference type="RefSeq" id="NP_001379265.1">
    <property type="nucleotide sequence ID" value="NM_001393131.1"/>
</dbReference>
<dbReference type="SMR" id="Q09442"/>
<dbReference type="BioGRID" id="606934">
    <property type="interactions" value="16"/>
</dbReference>
<dbReference type="FunCoup" id="Q09442">
    <property type="interactions" value="2480"/>
</dbReference>
<dbReference type="IntAct" id="Q09442">
    <property type="interactions" value="15"/>
</dbReference>
<dbReference type="STRING" id="6239.C08B11.5.1"/>
<dbReference type="iPTMnet" id="Q09442"/>
<dbReference type="PaxDb" id="6239-C08B11.5"/>
<dbReference type="PeptideAtlas" id="Q09442"/>
<dbReference type="EnsemblMetazoa" id="C08B11.5.1">
    <property type="protein sequence ID" value="C08B11.5.1"/>
    <property type="gene ID" value="WBGene00004723"/>
</dbReference>
<dbReference type="GeneID" id="4363023"/>
<dbReference type="UCSC" id="C08B11.5.1">
    <property type="organism name" value="c. elegans"/>
</dbReference>
<dbReference type="AGR" id="WB:WBGene00004723"/>
<dbReference type="WormBase" id="C08B11.5">
    <property type="protein sequence ID" value="CE36374"/>
    <property type="gene ID" value="WBGene00004723"/>
    <property type="gene designation" value="sap-49"/>
</dbReference>
<dbReference type="eggNOG" id="KOG0131">
    <property type="taxonomic scope" value="Eukaryota"/>
</dbReference>
<dbReference type="GeneTree" id="ENSGT00870000136537"/>
<dbReference type="HOGENOM" id="CLU_012062_21_0_1"/>
<dbReference type="InParanoid" id="Q09442"/>
<dbReference type="OMA" id="AMVYEIM"/>
<dbReference type="OrthoDB" id="10259687at2759"/>
<dbReference type="PhylomeDB" id="Q09442"/>
<dbReference type="Reactome" id="R-CEL-72165">
    <property type="pathway name" value="mRNA Splicing - Minor Pathway"/>
</dbReference>
<dbReference type="SignaLink" id="Q09442"/>
<dbReference type="PRO" id="PR:Q09442"/>
<dbReference type="Proteomes" id="UP000001940">
    <property type="component" value="Chromosome II"/>
</dbReference>
<dbReference type="Bgee" id="WBGene00004723">
    <property type="expression patterns" value="Expressed in embryo and 4 other cell types or tissues"/>
</dbReference>
<dbReference type="GO" id="GO:0071011">
    <property type="term" value="C:precatalytic spliceosome"/>
    <property type="evidence" value="ECO:0000318"/>
    <property type="project" value="GO_Central"/>
</dbReference>
<dbReference type="GO" id="GO:0005686">
    <property type="term" value="C:U2 snRNP"/>
    <property type="evidence" value="ECO:0000318"/>
    <property type="project" value="GO_Central"/>
</dbReference>
<dbReference type="GO" id="GO:0003723">
    <property type="term" value="F:RNA binding"/>
    <property type="evidence" value="ECO:0000318"/>
    <property type="project" value="GO_Central"/>
</dbReference>
<dbReference type="GO" id="GO:0000398">
    <property type="term" value="P:mRNA splicing, via spliceosome"/>
    <property type="evidence" value="ECO:0000318"/>
    <property type="project" value="GO_Central"/>
</dbReference>
<dbReference type="CDD" id="cd12334">
    <property type="entry name" value="RRM1_SF3B4"/>
    <property type="match status" value="1"/>
</dbReference>
<dbReference type="CDD" id="cd12335">
    <property type="entry name" value="RRM2_SF3B4"/>
    <property type="match status" value="1"/>
</dbReference>
<dbReference type="FunFam" id="3.30.70.330:FF:000141">
    <property type="entry name" value="Splicing factor 3b subunit 4"/>
    <property type="match status" value="1"/>
</dbReference>
<dbReference type="FunFam" id="3.30.70.330:FF:000059">
    <property type="entry name" value="splicing factor 3B subunit 4"/>
    <property type="match status" value="1"/>
</dbReference>
<dbReference type="Gene3D" id="3.30.70.330">
    <property type="match status" value="2"/>
</dbReference>
<dbReference type="InterPro" id="IPR012677">
    <property type="entry name" value="Nucleotide-bd_a/b_plait_sf"/>
</dbReference>
<dbReference type="InterPro" id="IPR035979">
    <property type="entry name" value="RBD_domain_sf"/>
</dbReference>
<dbReference type="InterPro" id="IPR000504">
    <property type="entry name" value="RRM_dom"/>
</dbReference>
<dbReference type="InterPro" id="IPR034158">
    <property type="entry name" value="SF3B4_RRM1"/>
</dbReference>
<dbReference type="InterPro" id="IPR034159">
    <property type="entry name" value="SF3B4_RRM2"/>
</dbReference>
<dbReference type="InterPro" id="IPR052084">
    <property type="entry name" value="SF3B4_spliceosome_assoc"/>
</dbReference>
<dbReference type="PANTHER" id="PTHR48030">
    <property type="entry name" value="SPLICING FACTOR 3B SUBUNIT 4"/>
    <property type="match status" value="1"/>
</dbReference>
<dbReference type="PANTHER" id="PTHR48030:SF3">
    <property type="entry name" value="SPLICING FACTOR 3B SUBUNIT 4"/>
    <property type="match status" value="1"/>
</dbReference>
<dbReference type="Pfam" id="PF00076">
    <property type="entry name" value="RRM_1"/>
    <property type="match status" value="2"/>
</dbReference>
<dbReference type="SMART" id="SM00360">
    <property type="entry name" value="RRM"/>
    <property type="match status" value="2"/>
</dbReference>
<dbReference type="SUPFAM" id="SSF54928">
    <property type="entry name" value="RNA-binding domain, RBD"/>
    <property type="match status" value="1"/>
</dbReference>
<dbReference type="PROSITE" id="PS50102">
    <property type="entry name" value="RRM"/>
    <property type="match status" value="2"/>
</dbReference>
<gene>
    <name type="primary">sap-49</name>
    <name type="ORF">C08B11.5</name>
</gene>
<name>SF3B4_CAEEL</name>
<feature type="chain" id="PRO_0000082013" description="Splicing factor 3B subunit 4">
    <location>
        <begin position="1"/>
        <end position="388"/>
    </location>
</feature>
<feature type="domain" description="RRM 1" evidence="2">
    <location>
        <begin position="13"/>
        <end position="91"/>
    </location>
</feature>
<feature type="domain" description="RRM 2" evidence="2">
    <location>
        <begin position="100"/>
        <end position="179"/>
    </location>
</feature>
<feature type="region of interest" description="Disordered" evidence="3">
    <location>
        <begin position="244"/>
        <end position="388"/>
    </location>
</feature>
<feature type="compositionally biased region" description="Pro residues" evidence="3">
    <location>
        <begin position="261"/>
        <end position="325"/>
    </location>
</feature>
<feature type="compositionally biased region" description="Pro residues" evidence="3">
    <location>
        <begin position="333"/>
        <end position="355"/>
    </location>
</feature>
<feature type="compositionally biased region" description="Pro residues" evidence="3">
    <location>
        <begin position="362"/>
        <end position="388"/>
    </location>
</feature>
<organism>
    <name type="scientific">Caenorhabditis elegans</name>
    <dbReference type="NCBI Taxonomy" id="6239"/>
    <lineage>
        <taxon>Eukaryota</taxon>
        <taxon>Metazoa</taxon>
        <taxon>Ecdysozoa</taxon>
        <taxon>Nematoda</taxon>
        <taxon>Chromadorea</taxon>
        <taxon>Rhabditida</taxon>
        <taxon>Rhabditina</taxon>
        <taxon>Rhabditomorpha</taxon>
        <taxon>Rhabditoidea</taxon>
        <taxon>Rhabditidae</taxon>
        <taxon>Peloderinae</taxon>
        <taxon>Caenorhabditis</taxon>
    </lineage>
</organism>
<reference key="1">
    <citation type="journal article" date="1998" name="Science">
        <title>Genome sequence of the nematode C. elegans: a platform for investigating biology.</title>
        <authorList>
            <consortium name="The C. elegans sequencing consortium"/>
        </authorList>
    </citation>
    <scope>NUCLEOTIDE SEQUENCE [LARGE SCALE GENOMIC DNA]</scope>
    <source>
        <strain>Bristol N2</strain>
    </source>
</reference>